<organism>
    <name type="scientific">Aeromonas hydrophila</name>
    <dbReference type="NCBI Taxonomy" id="644"/>
    <lineage>
        <taxon>Bacteria</taxon>
        <taxon>Pseudomonadati</taxon>
        <taxon>Pseudomonadota</taxon>
        <taxon>Gammaproteobacteria</taxon>
        <taxon>Aeromonadales</taxon>
        <taxon>Aeromonadaceae</taxon>
        <taxon>Aeromonas</taxon>
    </lineage>
</organism>
<proteinExistence type="inferred from homology"/>
<feature type="signal peptide" evidence="2">
    <location>
        <begin position="1"/>
        <end position="24"/>
    </location>
</feature>
<feature type="chain" id="PRO_0000001327" description="Alpha-amylase">
    <location>
        <begin position="25"/>
        <end position="443"/>
    </location>
</feature>
<feature type="active site" description="Nucleophile" evidence="1">
    <location>
        <position position="198"/>
    </location>
</feature>
<feature type="active site" description="Proton donor" evidence="1">
    <location>
        <position position="223"/>
    </location>
</feature>
<feature type="binding site" evidence="1">
    <location>
        <position position="114"/>
    </location>
    <ligand>
        <name>substrate</name>
    </ligand>
</feature>
<feature type="binding site" evidence="1">
    <location>
        <position position="196"/>
    </location>
    <ligand>
        <name>substrate</name>
    </ligand>
</feature>
<feature type="binding site" evidence="1">
    <location>
        <begin position="201"/>
        <end position="202"/>
    </location>
    <ligand>
        <name>substrate</name>
    </ligand>
</feature>
<feature type="binding site" evidence="1">
    <location>
        <position position="228"/>
    </location>
    <ligand>
        <name>substrate</name>
    </ligand>
</feature>
<feature type="binding site" evidence="1">
    <location>
        <position position="287"/>
    </location>
    <ligand>
        <name>substrate</name>
    </ligand>
</feature>
<feature type="site" description="Transition state stabilizer" evidence="1">
    <location>
        <position position="288"/>
    </location>
</feature>
<keyword id="KW-0119">Carbohydrate metabolism</keyword>
<keyword id="KW-0326">Glycosidase</keyword>
<keyword id="KW-0378">Hydrolase</keyword>
<keyword id="KW-0964">Secreted</keyword>
<keyword id="KW-0732">Signal</keyword>
<gene>
    <name type="primary">amyA</name>
</gene>
<name>AMYA_AERHY</name>
<dbReference type="EC" id="3.2.1.1"/>
<dbReference type="EMBL" id="L19299">
    <property type="protein sequence ID" value="AAA21016.1"/>
    <property type="molecule type" value="Genomic_DNA"/>
</dbReference>
<dbReference type="PIR" id="I39538">
    <property type="entry name" value="I39538"/>
</dbReference>
<dbReference type="SMR" id="P41131"/>
<dbReference type="CAZy" id="GH13">
    <property type="family name" value="Glycoside Hydrolase Family 13"/>
</dbReference>
<dbReference type="GO" id="GO:0005576">
    <property type="term" value="C:extracellular region"/>
    <property type="evidence" value="ECO:0007669"/>
    <property type="project" value="UniProtKB-SubCell"/>
</dbReference>
<dbReference type="GO" id="GO:0004556">
    <property type="term" value="F:alpha-amylase activity"/>
    <property type="evidence" value="ECO:0007669"/>
    <property type="project" value="UniProtKB-EC"/>
</dbReference>
<dbReference type="GO" id="GO:0043169">
    <property type="term" value="F:cation binding"/>
    <property type="evidence" value="ECO:0007669"/>
    <property type="project" value="InterPro"/>
</dbReference>
<dbReference type="GO" id="GO:0005975">
    <property type="term" value="P:carbohydrate metabolic process"/>
    <property type="evidence" value="ECO:0007669"/>
    <property type="project" value="InterPro"/>
</dbReference>
<dbReference type="CDD" id="cd11317">
    <property type="entry name" value="AmyAc_bac_euk_AmyA"/>
    <property type="match status" value="1"/>
</dbReference>
<dbReference type="Gene3D" id="3.20.20.80">
    <property type="entry name" value="Glycosidases"/>
    <property type="match status" value="1"/>
</dbReference>
<dbReference type="Gene3D" id="2.60.40.1180">
    <property type="entry name" value="Golgi alpha-mannosidase II"/>
    <property type="match status" value="1"/>
</dbReference>
<dbReference type="InterPro" id="IPR006046">
    <property type="entry name" value="Alpha_amylase"/>
</dbReference>
<dbReference type="InterPro" id="IPR006047">
    <property type="entry name" value="Glyco_hydro_13_cat_dom"/>
</dbReference>
<dbReference type="InterPro" id="IPR013780">
    <property type="entry name" value="Glyco_hydro_b"/>
</dbReference>
<dbReference type="InterPro" id="IPR017853">
    <property type="entry name" value="Glycoside_hydrolase_SF"/>
</dbReference>
<dbReference type="PANTHER" id="PTHR43447">
    <property type="entry name" value="ALPHA-AMYLASE"/>
    <property type="match status" value="1"/>
</dbReference>
<dbReference type="Pfam" id="PF00128">
    <property type="entry name" value="Alpha-amylase"/>
    <property type="match status" value="1"/>
</dbReference>
<dbReference type="PRINTS" id="PR00110">
    <property type="entry name" value="ALPHAAMYLASE"/>
</dbReference>
<dbReference type="SMART" id="SM00642">
    <property type="entry name" value="Aamy"/>
    <property type="match status" value="1"/>
</dbReference>
<dbReference type="SUPFAM" id="SSF51445">
    <property type="entry name" value="(Trans)glycosidases"/>
    <property type="match status" value="1"/>
</dbReference>
<dbReference type="SUPFAM" id="SSF51011">
    <property type="entry name" value="Glycosyl hydrolase domain"/>
    <property type="match status" value="1"/>
</dbReference>
<comment type="catalytic activity">
    <reaction>
        <text>Endohydrolysis of (1-&gt;4)-alpha-D-glucosidic linkages in polysaccharides containing three or more (1-&gt;4)-alpha-linked D-glucose units.</text>
        <dbReference type="EC" id="3.2.1.1"/>
    </reaction>
</comment>
<comment type="subcellular location">
    <subcellularLocation>
        <location>Secreted</location>
    </subcellularLocation>
</comment>
<comment type="similarity">
    <text evidence="3">Belongs to the glycosyl hydrolase 13 family.</text>
</comment>
<accession>P41131</accession>
<evidence type="ECO:0000250" key="1"/>
<evidence type="ECO:0000255" key="2"/>
<evidence type="ECO:0000305" key="3"/>
<sequence length="443" mass="48333">MHNTLFRTALLAAALGSFSHTASAEGVMVHLFEWKFNDIANECETVLGPKGFGGVQVSPPAEHKQGSQVWWTVYQPVSYKNFNSFGGCEAELRSMIARCNAAGVKVYADAVFNHMASGSGTATGGGSYNSGQYQYPQFGYNDFHHSGDITNYGDSNNVWNGALYGLPDLNTGSSYVQDQIATYMKTLLGWGVAGFRIDAAKHMAPADVKAILDKAGSPRAYLEVIGAGGESPDIQPGRYTYIDTVTEFKYGTDLAANFNGQIKNLKTLGESWGLLPSNKAFVFVDNHDPERAHGGGGMLTFMQGARYDLANTFMLAWPYGWKQVMSAYRFENMGTYETDKGAPGSTPCTDSQWNCEQRRPTIMNMVLFRNRTEGQPVSNWWDNGNNQIAFSRGTRASSPSTTRAARWWPRCRRSRPASTATSWGAMTTAAAVMSPSTAAARPA</sequence>
<reference key="1">
    <citation type="journal article" date="1993" name="J. Gen. Microbiol.">
        <title>Cloning and nucleotide sequence of an extracellular alpha-amylase gene from Aeromonas hydrophila MCC-1.</title>
        <authorList>
            <person name="Chang M.C."/>
            <person name="Chang J.C."/>
            <person name="Chen J.P."/>
        </authorList>
    </citation>
    <scope>NUCLEOTIDE SEQUENCE [GENOMIC DNA]</scope>
    <source>
        <strain>MCC-1</strain>
    </source>
</reference>
<protein>
    <recommendedName>
        <fullName>Alpha-amylase</fullName>
        <ecNumber>3.2.1.1</ecNumber>
    </recommendedName>
    <alternativeName>
        <fullName>1,4-alpha-D-glucan glucanohydrolase</fullName>
    </alternativeName>
</protein>